<evidence type="ECO:0000250" key="1">
    <source>
        <dbReference type="UniProtKB" id="Q562C4"/>
    </source>
</evidence>
<evidence type="ECO:0000255" key="2"/>
<evidence type="ECO:0000269" key="3">
    <source>
    </source>
</evidence>
<evidence type="ECO:0000269" key="4">
    <source>
    </source>
</evidence>
<evidence type="ECO:0000303" key="5">
    <source>
    </source>
</evidence>
<evidence type="ECO:0000303" key="6">
    <source>
    </source>
</evidence>
<evidence type="ECO:0000305" key="7"/>
<evidence type="ECO:0000312" key="8">
    <source>
        <dbReference type="HGNC" id="HGNC:28276"/>
    </source>
</evidence>
<keyword id="KW-0963">Cytoplasm</keyword>
<keyword id="KW-0256">Endoplasmic reticulum</keyword>
<keyword id="KW-0551">Lipid droplet</keyword>
<keyword id="KW-0472">Membrane</keyword>
<keyword id="KW-0489">Methyltransferase</keyword>
<keyword id="KW-0492">Microsome</keyword>
<keyword id="KW-1267">Proteomics identification</keyword>
<keyword id="KW-1185">Reference proteome</keyword>
<keyword id="KW-0949">S-adenosyl-L-methionine</keyword>
<keyword id="KW-0732">Signal</keyword>
<keyword id="KW-0808">Transferase</keyword>
<organism>
    <name type="scientific">Homo sapiens</name>
    <name type="common">Human</name>
    <dbReference type="NCBI Taxonomy" id="9606"/>
    <lineage>
        <taxon>Eukaryota</taxon>
        <taxon>Metazoa</taxon>
        <taxon>Chordata</taxon>
        <taxon>Craniata</taxon>
        <taxon>Vertebrata</taxon>
        <taxon>Euteleostomi</taxon>
        <taxon>Mammalia</taxon>
        <taxon>Eutheria</taxon>
        <taxon>Euarchontoglires</taxon>
        <taxon>Primates</taxon>
        <taxon>Haplorrhini</taxon>
        <taxon>Catarrhini</taxon>
        <taxon>Hominidae</taxon>
        <taxon>Homo</taxon>
    </lineage>
</organism>
<feature type="signal peptide" evidence="2">
    <location>
        <begin position="1"/>
        <end position="23"/>
    </location>
</feature>
<feature type="chain" id="PRO_0000251922" description="Thiol S-methyltransferase TMT1B">
    <location>
        <begin position="24"/>
        <end position="244"/>
    </location>
</feature>
<feature type="mutagenesis site" description="Loss of catalytic activity." evidence="3">
    <original>D</original>
    <variation>A</variation>
    <location>
        <position position="98"/>
    </location>
</feature>
<accession>Q6UX53</accession>
<accession>A8K247</accession>
<accession>Q8WUI1</accession>
<name>TMT1B_HUMAN</name>
<protein>
    <recommendedName>
        <fullName>Thiol S-methyltransferase TMT1B</fullName>
        <ecNumber evidence="3 4">2.1.1.9</ecNumber>
    </recommendedName>
    <alternativeName>
        <fullName>Methyltransferase-like protein 7B</fullName>
    </alternativeName>
    <alternativeName>
        <fullName>Thiol S-methyltransferase METTL7B</fullName>
    </alternativeName>
</protein>
<comment type="function">
    <text evidence="3 4">Thiol S-methyltransferase that catalyzes the transfer of a methyl group from S-adenosyl-L-methionine to alkyl and phenolic thiol-containing acceptor substrates. Together with TMT1B accounts for most of S-thiol methylation activity in the endoplasmic reticulum of hepatocytes. Selectively methylates S-centered nucleophiles from metabolites such as hydrogen sulfide and dithiothreitol.</text>
</comment>
<comment type="catalytic activity">
    <reaction evidence="3 4">
        <text>a thiol + S-adenosyl-L-methionine = a methyl thioether + S-adenosyl-L-homocysteine + H(+)</text>
        <dbReference type="Rhea" id="RHEA:18277"/>
        <dbReference type="ChEBI" id="CHEBI:15378"/>
        <dbReference type="ChEBI" id="CHEBI:29256"/>
        <dbReference type="ChEBI" id="CHEBI:57856"/>
        <dbReference type="ChEBI" id="CHEBI:59789"/>
        <dbReference type="ChEBI" id="CHEBI:86315"/>
        <dbReference type="EC" id="2.1.1.9"/>
    </reaction>
    <physiologicalReaction direction="left-to-right" evidence="4">
        <dbReference type="Rhea" id="RHEA:18278"/>
    </physiologicalReaction>
</comment>
<comment type="biophysicochemical properties">
    <kinetics>
        <KM evidence="3">146.2 uM for hydrogen sulfide</KM>
        <KM evidence="3">89.8 uM for captopril</KM>
        <KM evidence="3">25.5 uM for dithiothreitol</KM>
        <KM evidence="3">48.9 uM for 7alpha-thiospironolactone</KM>
        <KM evidence="4">32.5 uM for 7alpha-thiospironolactone</KM>
    </kinetics>
</comment>
<comment type="subcellular location">
    <subcellularLocation>
        <location evidence="1">Endoplasmic reticulum membrane</location>
        <topology evidence="1">Peripheral membrane protein</topology>
    </subcellularLocation>
    <subcellularLocation>
        <location evidence="1">Lipid droplet</location>
    </subcellularLocation>
    <subcellularLocation>
        <location evidence="4">Microsome</location>
    </subcellularLocation>
    <subcellularLocation>
        <location evidence="4">Cytoplasm</location>
        <location evidence="4">Cytosol</location>
    </subcellularLocation>
    <text evidence="1">Highly concentrated in the perinuclear area of the endoplasmic reticulum (ER) and surrounding lipid droplets. May be associated with the specific regions of the LR that form lipid droplets and targeted to the initial deposits of lipids where the lipid droplets form.</text>
</comment>
<comment type="tissue specificity">
    <text evidence="4">Expressed in the liver.</text>
</comment>
<comment type="miscellaneous">
    <text evidence="3 4">Methylates drugs such as 7alpha-thiospironolactone, L-penicillamine and captopril.</text>
</comment>
<comment type="similarity">
    <text evidence="7">Belongs to the methyltransferase superfamily.</text>
</comment>
<comment type="sequence caution" evidence="7">
    <conflict type="erroneous termination">
        <sequence resource="EMBL-CDS" id="AAQ88872"/>
    </conflict>
    <text>Extended C-terminus.</text>
</comment>
<comment type="sequence caution" evidence="7">
    <conflict type="erroneous initiation">
        <sequence resource="EMBL-CDS" id="BAF82801"/>
    </conflict>
</comment>
<dbReference type="EC" id="2.1.1.9" evidence="3 4"/>
<dbReference type="EMBL" id="AY358508">
    <property type="protein sequence ID" value="AAQ88872.1"/>
    <property type="status" value="ALT_TERM"/>
    <property type="molecule type" value="mRNA"/>
</dbReference>
<dbReference type="EMBL" id="AK290112">
    <property type="protein sequence ID" value="BAF82801.1"/>
    <property type="status" value="ALT_INIT"/>
    <property type="molecule type" value="mRNA"/>
</dbReference>
<dbReference type="EMBL" id="AC009779">
    <property type="status" value="NOT_ANNOTATED_CDS"/>
    <property type="molecule type" value="Genomic_DNA"/>
</dbReference>
<dbReference type="CCDS" id="CCDS8887.2"/>
<dbReference type="RefSeq" id="NP_689850.2">
    <property type="nucleotide sequence ID" value="NM_152637.3"/>
</dbReference>
<dbReference type="SMR" id="Q6UX53"/>
<dbReference type="BioGRID" id="128204">
    <property type="interactions" value="20"/>
</dbReference>
<dbReference type="FunCoup" id="Q6UX53">
    <property type="interactions" value="94"/>
</dbReference>
<dbReference type="IntAct" id="Q6UX53">
    <property type="interactions" value="12"/>
</dbReference>
<dbReference type="STRING" id="9606.ENSP00000377796"/>
<dbReference type="iPTMnet" id="Q6UX53"/>
<dbReference type="PhosphoSitePlus" id="Q6UX53"/>
<dbReference type="SwissPalm" id="Q6UX53"/>
<dbReference type="BioMuta" id="METTL7B"/>
<dbReference type="DMDM" id="115502257"/>
<dbReference type="jPOST" id="Q6UX53"/>
<dbReference type="MassIVE" id="Q6UX53"/>
<dbReference type="PaxDb" id="9606-ENSP00000377796"/>
<dbReference type="PeptideAtlas" id="Q6UX53"/>
<dbReference type="ProteomicsDB" id="67567"/>
<dbReference type="Pumba" id="Q6UX53"/>
<dbReference type="Antibodypedia" id="27618">
    <property type="antibodies" value="188 antibodies from 30 providers"/>
</dbReference>
<dbReference type="DNASU" id="196410"/>
<dbReference type="Ensembl" id="ENST00000394252.4">
    <property type="protein sequence ID" value="ENSP00000377796.3"/>
    <property type="gene ID" value="ENSG00000170439.8"/>
</dbReference>
<dbReference type="GeneID" id="196410"/>
<dbReference type="KEGG" id="hsa:196410"/>
<dbReference type="MANE-Select" id="ENST00000394252.4">
    <property type="protein sequence ID" value="ENSP00000377796.3"/>
    <property type="RefSeq nucleotide sequence ID" value="NM_152637.3"/>
    <property type="RefSeq protein sequence ID" value="NP_689850.2"/>
</dbReference>
<dbReference type="UCSC" id="uc010spr.3">
    <property type="organism name" value="human"/>
</dbReference>
<dbReference type="AGR" id="HGNC:28276"/>
<dbReference type="CTD" id="196410"/>
<dbReference type="DisGeNET" id="196410"/>
<dbReference type="GeneCards" id="TMT1B"/>
<dbReference type="HGNC" id="HGNC:28276">
    <property type="gene designation" value="TMT1B"/>
</dbReference>
<dbReference type="HPA" id="ENSG00000170439">
    <property type="expression patterns" value="Tissue enhanced (epididymis, heart muscle, liver)"/>
</dbReference>
<dbReference type="neXtProt" id="NX_Q6UX53"/>
<dbReference type="OpenTargets" id="ENSG00000170439"/>
<dbReference type="PharmGKB" id="PA143485533"/>
<dbReference type="VEuPathDB" id="HostDB:ENSG00000170439"/>
<dbReference type="eggNOG" id="KOG4300">
    <property type="taxonomic scope" value="Eukaryota"/>
</dbReference>
<dbReference type="GeneTree" id="ENSGT00940000162340"/>
<dbReference type="HOGENOM" id="CLU_037990_7_2_1"/>
<dbReference type="InParanoid" id="Q6UX53"/>
<dbReference type="OMA" id="PPPIKWL"/>
<dbReference type="OrthoDB" id="8191at9604"/>
<dbReference type="PAN-GO" id="Q6UX53">
    <property type="GO annotations" value="1 GO annotation based on evolutionary models"/>
</dbReference>
<dbReference type="PhylomeDB" id="Q6UX53"/>
<dbReference type="TreeFam" id="TF331790"/>
<dbReference type="PathwayCommons" id="Q6UX53"/>
<dbReference type="SignaLink" id="Q6UX53"/>
<dbReference type="BioGRID-ORCS" id="196410">
    <property type="hits" value="12 hits in 1147 CRISPR screens"/>
</dbReference>
<dbReference type="GenomeRNAi" id="196410"/>
<dbReference type="Pharos" id="Q6UX53">
    <property type="development level" value="Tbio"/>
</dbReference>
<dbReference type="PRO" id="PR:Q6UX53"/>
<dbReference type="Proteomes" id="UP000005640">
    <property type="component" value="Chromosome 12"/>
</dbReference>
<dbReference type="RNAct" id="Q6UX53">
    <property type="molecule type" value="protein"/>
</dbReference>
<dbReference type="Bgee" id="ENSG00000170439">
    <property type="expression patterns" value="Expressed in ileal mucosa and 107 other cell types or tissues"/>
</dbReference>
<dbReference type="ExpressionAtlas" id="Q6UX53">
    <property type="expression patterns" value="baseline and differential"/>
</dbReference>
<dbReference type="GO" id="GO:0005829">
    <property type="term" value="C:cytosol"/>
    <property type="evidence" value="ECO:0007669"/>
    <property type="project" value="UniProtKB-SubCell"/>
</dbReference>
<dbReference type="GO" id="GO:0005789">
    <property type="term" value="C:endoplasmic reticulum membrane"/>
    <property type="evidence" value="ECO:0007669"/>
    <property type="project" value="UniProtKB-SubCell"/>
</dbReference>
<dbReference type="GO" id="GO:0005811">
    <property type="term" value="C:lipid droplet"/>
    <property type="evidence" value="ECO:0007669"/>
    <property type="project" value="UniProtKB-SubCell"/>
</dbReference>
<dbReference type="GO" id="GO:0008757">
    <property type="term" value="F:S-adenosylmethionine-dependent methyltransferase activity"/>
    <property type="evidence" value="ECO:0000315"/>
    <property type="project" value="UniProtKB"/>
</dbReference>
<dbReference type="GO" id="GO:0018708">
    <property type="term" value="F:thiol S-methyltransferase activity"/>
    <property type="evidence" value="ECO:0000314"/>
    <property type="project" value="UniProtKB"/>
</dbReference>
<dbReference type="GO" id="GO:0032259">
    <property type="term" value="P:methylation"/>
    <property type="evidence" value="ECO:0007669"/>
    <property type="project" value="UniProtKB-KW"/>
</dbReference>
<dbReference type="CDD" id="cd02440">
    <property type="entry name" value="AdoMet_MTases"/>
    <property type="match status" value="1"/>
</dbReference>
<dbReference type="Gene3D" id="3.40.50.150">
    <property type="entry name" value="Vaccinia Virus protein VP39"/>
    <property type="match status" value="1"/>
</dbReference>
<dbReference type="InterPro" id="IPR013216">
    <property type="entry name" value="Methyltransf_11"/>
</dbReference>
<dbReference type="InterPro" id="IPR029063">
    <property type="entry name" value="SAM-dependent_MTases_sf"/>
</dbReference>
<dbReference type="InterPro" id="IPR052356">
    <property type="entry name" value="Thiol_S-MT"/>
</dbReference>
<dbReference type="PANTHER" id="PTHR45036">
    <property type="entry name" value="METHYLTRANSFERASE LIKE 7B"/>
    <property type="match status" value="1"/>
</dbReference>
<dbReference type="PANTHER" id="PTHR45036:SF6">
    <property type="entry name" value="THIOL S-METHYLTRANSFERASE TMT1B"/>
    <property type="match status" value="1"/>
</dbReference>
<dbReference type="Pfam" id="PF08241">
    <property type="entry name" value="Methyltransf_11"/>
    <property type="match status" value="1"/>
</dbReference>
<dbReference type="SUPFAM" id="SSF53335">
    <property type="entry name" value="S-adenosyl-L-methionine-dependent methyltransferases"/>
    <property type="match status" value="1"/>
</dbReference>
<reference key="1">
    <citation type="journal article" date="2003" name="Genome Res.">
        <title>The secreted protein discovery initiative (SPDI), a large-scale effort to identify novel human secreted and transmembrane proteins: a bioinformatics assessment.</title>
        <authorList>
            <person name="Clark H.F."/>
            <person name="Gurney A.L."/>
            <person name="Abaya E."/>
            <person name="Baker K."/>
            <person name="Baldwin D.T."/>
            <person name="Brush J."/>
            <person name="Chen J."/>
            <person name="Chow B."/>
            <person name="Chui C."/>
            <person name="Crowley C."/>
            <person name="Currell B."/>
            <person name="Deuel B."/>
            <person name="Dowd P."/>
            <person name="Eaton D."/>
            <person name="Foster J.S."/>
            <person name="Grimaldi C."/>
            <person name="Gu Q."/>
            <person name="Hass P.E."/>
            <person name="Heldens S."/>
            <person name="Huang A."/>
            <person name="Kim H.S."/>
            <person name="Klimowski L."/>
            <person name="Jin Y."/>
            <person name="Johnson S."/>
            <person name="Lee J."/>
            <person name="Lewis L."/>
            <person name="Liao D."/>
            <person name="Mark M.R."/>
            <person name="Robbie E."/>
            <person name="Sanchez C."/>
            <person name="Schoenfeld J."/>
            <person name="Seshagiri S."/>
            <person name="Simmons L."/>
            <person name="Singh J."/>
            <person name="Smith V."/>
            <person name="Stinson J."/>
            <person name="Vagts A."/>
            <person name="Vandlen R.L."/>
            <person name="Watanabe C."/>
            <person name="Wieand D."/>
            <person name="Woods K."/>
            <person name="Xie M.-H."/>
            <person name="Yansura D.G."/>
            <person name="Yi S."/>
            <person name="Yu G."/>
            <person name="Yuan J."/>
            <person name="Zhang M."/>
            <person name="Zhang Z."/>
            <person name="Goddard A.D."/>
            <person name="Wood W.I."/>
            <person name="Godowski P.J."/>
            <person name="Gray A.M."/>
        </authorList>
    </citation>
    <scope>NUCLEOTIDE SEQUENCE [LARGE SCALE MRNA]</scope>
</reference>
<reference key="2">
    <citation type="journal article" date="2004" name="Nat. Genet.">
        <title>Complete sequencing and characterization of 21,243 full-length human cDNAs.</title>
        <authorList>
            <person name="Ota T."/>
            <person name="Suzuki Y."/>
            <person name="Nishikawa T."/>
            <person name="Otsuki T."/>
            <person name="Sugiyama T."/>
            <person name="Irie R."/>
            <person name="Wakamatsu A."/>
            <person name="Hayashi K."/>
            <person name="Sato H."/>
            <person name="Nagai K."/>
            <person name="Kimura K."/>
            <person name="Makita H."/>
            <person name="Sekine M."/>
            <person name="Obayashi M."/>
            <person name="Nishi T."/>
            <person name="Shibahara T."/>
            <person name="Tanaka T."/>
            <person name="Ishii S."/>
            <person name="Yamamoto J."/>
            <person name="Saito K."/>
            <person name="Kawai Y."/>
            <person name="Isono Y."/>
            <person name="Nakamura Y."/>
            <person name="Nagahari K."/>
            <person name="Murakami K."/>
            <person name="Yasuda T."/>
            <person name="Iwayanagi T."/>
            <person name="Wagatsuma M."/>
            <person name="Shiratori A."/>
            <person name="Sudo H."/>
            <person name="Hosoiri T."/>
            <person name="Kaku Y."/>
            <person name="Kodaira H."/>
            <person name="Kondo H."/>
            <person name="Sugawara M."/>
            <person name="Takahashi M."/>
            <person name="Kanda K."/>
            <person name="Yokoi T."/>
            <person name="Furuya T."/>
            <person name="Kikkawa E."/>
            <person name="Omura Y."/>
            <person name="Abe K."/>
            <person name="Kamihara K."/>
            <person name="Katsuta N."/>
            <person name="Sato K."/>
            <person name="Tanikawa M."/>
            <person name="Yamazaki M."/>
            <person name="Ninomiya K."/>
            <person name="Ishibashi T."/>
            <person name="Yamashita H."/>
            <person name="Murakawa K."/>
            <person name="Fujimori K."/>
            <person name="Tanai H."/>
            <person name="Kimata M."/>
            <person name="Watanabe M."/>
            <person name="Hiraoka S."/>
            <person name="Chiba Y."/>
            <person name="Ishida S."/>
            <person name="Ono Y."/>
            <person name="Takiguchi S."/>
            <person name="Watanabe S."/>
            <person name="Yosida M."/>
            <person name="Hotuta T."/>
            <person name="Kusano J."/>
            <person name="Kanehori K."/>
            <person name="Takahashi-Fujii A."/>
            <person name="Hara H."/>
            <person name="Tanase T.-O."/>
            <person name="Nomura Y."/>
            <person name="Togiya S."/>
            <person name="Komai F."/>
            <person name="Hara R."/>
            <person name="Takeuchi K."/>
            <person name="Arita M."/>
            <person name="Imose N."/>
            <person name="Musashino K."/>
            <person name="Yuuki H."/>
            <person name="Oshima A."/>
            <person name="Sasaki N."/>
            <person name="Aotsuka S."/>
            <person name="Yoshikawa Y."/>
            <person name="Matsunawa H."/>
            <person name="Ichihara T."/>
            <person name="Shiohata N."/>
            <person name="Sano S."/>
            <person name="Moriya S."/>
            <person name="Momiyama H."/>
            <person name="Satoh N."/>
            <person name="Takami S."/>
            <person name="Terashima Y."/>
            <person name="Suzuki O."/>
            <person name="Nakagawa S."/>
            <person name="Senoh A."/>
            <person name="Mizoguchi H."/>
            <person name="Goto Y."/>
            <person name="Shimizu F."/>
            <person name="Wakebe H."/>
            <person name="Hishigaki H."/>
            <person name="Watanabe T."/>
            <person name="Sugiyama A."/>
            <person name="Takemoto M."/>
            <person name="Kawakami B."/>
            <person name="Yamazaki M."/>
            <person name="Watanabe K."/>
            <person name="Kumagai A."/>
            <person name="Itakura S."/>
            <person name="Fukuzumi Y."/>
            <person name="Fujimori Y."/>
            <person name="Komiyama M."/>
            <person name="Tashiro H."/>
            <person name="Tanigami A."/>
            <person name="Fujiwara T."/>
            <person name="Ono T."/>
            <person name="Yamada K."/>
            <person name="Fujii Y."/>
            <person name="Ozaki K."/>
            <person name="Hirao M."/>
            <person name="Ohmori Y."/>
            <person name="Kawabata A."/>
            <person name="Hikiji T."/>
            <person name="Kobatake N."/>
            <person name="Inagaki H."/>
            <person name="Ikema Y."/>
            <person name="Okamoto S."/>
            <person name="Okitani R."/>
            <person name="Kawakami T."/>
            <person name="Noguchi S."/>
            <person name="Itoh T."/>
            <person name="Shigeta K."/>
            <person name="Senba T."/>
            <person name="Matsumura K."/>
            <person name="Nakajima Y."/>
            <person name="Mizuno T."/>
            <person name="Morinaga M."/>
            <person name="Sasaki M."/>
            <person name="Togashi T."/>
            <person name="Oyama M."/>
            <person name="Hata H."/>
            <person name="Watanabe M."/>
            <person name="Komatsu T."/>
            <person name="Mizushima-Sugano J."/>
            <person name="Satoh T."/>
            <person name="Shirai Y."/>
            <person name="Takahashi Y."/>
            <person name="Nakagawa K."/>
            <person name="Okumura K."/>
            <person name="Nagase T."/>
            <person name="Nomura N."/>
            <person name="Kikuchi H."/>
            <person name="Masuho Y."/>
            <person name="Yamashita R."/>
            <person name="Nakai K."/>
            <person name="Yada T."/>
            <person name="Nakamura Y."/>
            <person name="Ohara O."/>
            <person name="Isogai T."/>
            <person name="Sugano S."/>
        </authorList>
    </citation>
    <scope>NUCLEOTIDE SEQUENCE [LARGE SCALE MRNA]</scope>
    <source>
        <tissue>Thalamus</tissue>
    </source>
</reference>
<reference key="3">
    <citation type="journal article" date="2006" name="Nature">
        <title>The finished DNA sequence of human chromosome 12.</title>
        <authorList>
            <person name="Scherer S.E."/>
            <person name="Muzny D.M."/>
            <person name="Buhay C.J."/>
            <person name="Chen R."/>
            <person name="Cree A."/>
            <person name="Ding Y."/>
            <person name="Dugan-Rocha S."/>
            <person name="Gill R."/>
            <person name="Gunaratne P."/>
            <person name="Harris R.A."/>
            <person name="Hawes A.C."/>
            <person name="Hernandez J."/>
            <person name="Hodgson A.V."/>
            <person name="Hume J."/>
            <person name="Jackson A."/>
            <person name="Khan Z.M."/>
            <person name="Kovar-Smith C."/>
            <person name="Lewis L.R."/>
            <person name="Lozado R.J."/>
            <person name="Metzker M.L."/>
            <person name="Milosavljevic A."/>
            <person name="Miner G.R."/>
            <person name="Montgomery K.T."/>
            <person name="Morgan M.B."/>
            <person name="Nazareth L.V."/>
            <person name="Scott G."/>
            <person name="Sodergren E."/>
            <person name="Song X.-Z."/>
            <person name="Steffen D."/>
            <person name="Lovering R.C."/>
            <person name="Wheeler D.A."/>
            <person name="Worley K.C."/>
            <person name="Yuan Y."/>
            <person name="Zhang Z."/>
            <person name="Adams C.Q."/>
            <person name="Ansari-Lari M.A."/>
            <person name="Ayele M."/>
            <person name="Brown M.J."/>
            <person name="Chen G."/>
            <person name="Chen Z."/>
            <person name="Clerc-Blankenburg K.P."/>
            <person name="Davis C."/>
            <person name="Delgado O."/>
            <person name="Dinh H.H."/>
            <person name="Draper H."/>
            <person name="Gonzalez-Garay M.L."/>
            <person name="Havlak P."/>
            <person name="Jackson L.R."/>
            <person name="Jacob L.S."/>
            <person name="Kelly S.H."/>
            <person name="Li L."/>
            <person name="Li Z."/>
            <person name="Liu J."/>
            <person name="Liu W."/>
            <person name="Lu J."/>
            <person name="Maheshwari M."/>
            <person name="Nguyen B.-V."/>
            <person name="Okwuonu G.O."/>
            <person name="Pasternak S."/>
            <person name="Perez L.M."/>
            <person name="Plopper F.J.H."/>
            <person name="Santibanez J."/>
            <person name="Shen H."/>
            <person name="Tabor P.E."/>
            <person name="Verduzco D."/>
            <person name="Waldron L."/>
            <person name="Wang Q."/>
            <person name="Williams G.A."/>
            <person name="Zhang J."/>
            <person name="Zhou J."/>
            <person name="Allen C.C."/>
            <person name="Amin A.G."/>
            <person name="Anyalebechi V."/>
            <person name="Bailey M."/>
            <person name="Barbaria J.A."/>
            <person name="Bimage K.E."/>
            <person name="Bryant N.P."/>
            <person name="Burch P.E."/>
            <person name="Burkett C.E."/>
            <person name="Burrell K.L."/>
            <person name="Calderon E."/>
            <person name="Cardenas V."/>
            <person name="Carter K."/>
            <person name="Casias K."/>
            <person name="Cavazos I."/>
            <person name="Cavazos S.R."/>
            <person name="Ceasar H."/>
            <person name="Chacko J."/>
            <person name="Chan S.N."/>
            <person name="Chavez D."/>
            <person name="Christopoulos C."/>
            <person name="Chu J."/>
            <person name="Cockrell R."/>
            <person name="Cox C.D."/>
            <person name="Dang M."/>
            <person name="Dathorne S.R."/>
            <person name="David R."/>
            <person name="Davis C.M."/>
            <person name="Davy-Carroll L."/>
            <person name="Deshazo D.R."/>
            <person name="Donlin J.E."/>
            <person name="D'Souza L."/>
            <person name="Eaves K.A."/>
            <person name="Egan A."/>
            <person name="Emery-Cohen A.J."/>
            <person name="Escotto M."/>
            <person name="Flagg N."/>
            <person name="Forbes L.D."/>
            <person name="Gabisi A.M."/>
            <person name="Garza M."/>
            <person name="Hamilton C."/>
            <person name="Henderson N."/>
            <person name="Hernandez O."/>
            <person name="Hines S."/>
            <person name="Hogues M.E."/>
            <person name="Huang M."/>
            <person name="Idlebird D.G."/>
            <person name="Johnson R."/>
            <person name="Jolivet A."/>
            <person name="Jones S."/>
            <person name="Kagan R."/>
            <person name="King L.M."/>
            <person name="Leal B."/>
            <person name="Lebow H."/>
            <person name="Lee S."/>
            <person name="LeVan J.M."/>
            <person name="Lewis L.C."/>
            <person name="London P."/>
            <person name="Lorensuhewa L.M."/>
            <person name="Loulseged H."/>
            <person name="Lovett D.A."/>
            <person name="Lucier A."/>
            <person name="Lucier R.L."/>
            <person name="Ma J."/>
            <person name="Madu R.C."/>
            <person name="Mapua P."/>
            <person name="Martindale A.D."/>
            <person name="Martinez E."/>
            <person name="Massey E."/>
            <person name="Mawhiney S."/>
            <person name="Meador M.G."/>
            <person name="Mendez S."/>
            <person name="Mercado C."/>
            <person name="Mercado I.C."/>
            <person name="Merritt C.E."/>
            <person name="Miner Z.L."/>
            <person name="Minja E."/>
            <person name="Mitchell T."/>
            <person name="Mohabbat F."/>
            <person name="Mohabbat K."/>
            <person name="Montgomery B."/>
            <person name="Moore N."/>
            <person name="Morris S."/>
            <person name="Munidasa M."/>
            <person name="Ngo R.N."/>
            <person name="Nguyen N.B."/>
            <person name="Nickerson E."/>
            <person name="Nwaokelemeh O.O."/>
            <person name="Nwokenkwo S."/>
            <person name="Obregon M."/>
            <person name="Oguh M."/>
            <person name="Oragunye N."/>
            <person name="Oviedo R.J."/>
            <person name="Parish B.J."/>
            <person name="Parker D.N."/>
            <person name="Parrish J."/>
            <person name="Parks K.L."/>
            <person name="Paul H.A."/>
            <person name="Payton B.A."/>
            <person name="Perez A."/>
            <person name="Perrin W."/>
            <person name="Pickens A."/>
            <person name="Primus E.L."/>
            <person name="Pu L.-L."/>
            <person name="Puazo M."/>
            <person name="Quiles M.M."/>
            <person name="Quiroz J.B."/>
            <person name="Rabata D."/>
            <person name="Reeves K."/>
            <person name="Ruiz S.J."/>
            <person name="Shao H."/>
            <person name="Sisson I."/>
            <person name="Sonaike T."/>
            <person name="Sorelle R.P."/>
            <person name="Sutton A.E."/>
            <person name="Svatek A.F."/>
            <person name="Svetz L.A."/>
            <person name="Tamerisa K.S."/>
            <person name="Taylor T.R."/>
            <person name="Teague B."/>
            <person name="Thomas N."/>
            <person name="Thorn R.D."/>
            <person name="Trejos Z.Y."/>
            <person name="Trevino B.K."/>
            <person name="Ukegbu O.N."/>
            <person name="Urban J.B."/>
            <person name="Vasquez L.I."/>
            <person name="Vera V.A."/>
            <person name="Villasana D.M."/>
            <person name="Wang L."/>
            <person name="Ward-Moore S."/>
            <person name="Warren J.T."/>
            <person name="Wei X."/>
            <person name="White F."/>
            <person name="Williamson A.L."/>
            <person name="Wleczyk R."/>
            <person name="Wooden H.S."/>
            <person name="Wooden S.H."/>
            <person name="Yen J."/>
            <person name="Yoon L."/>
            <person name="Yoon V."/>
            <person name="Zorrilla S.E."/>
            <person name="Nelson D."/>
            <person name="Kucherlapati R."/>
            <person name="Weinstock G."/>
            <person name="Gibbs R.A."/>
        </authorList>
    </citation>
    <scope>NUCLEOTIDE SEQUENCE [LARGE SCALE GENOMIC DNA]</scope>
</reference>
<reference key="4">
    <citation type="journal article" date="2014" name="J. Proteomics">
        <title>An enzyme assisted RP-RPLC approach for in-depth analysis of human liver phosphoproteome.</title>
        <authorList>
            <person name="Bian Y."/>
            <person name="Song C."/>
            <person name="Cheng K."/>
            <person name="Dong M."/>
            <person name="Wang F."/>
            <person name="Huang J."/>
            <person name="Sun D."/>
            <person name="Wang L."/>
            <person name="Ye M."/>
            <person name="Zou H."/>
        </authorList>
    </citation>
    <scope>IDENTIFICATION BY MASS SPECTROMETRY [LARGE SCALE ANALYSIS]</scope>
    <source>
        <tissue>Liver</tissue>
    </source>
</reference>
<reference key="5">
    <citation type="journal article" date="2021" name="Sci. Rep.">
        <title>Human METTL7B is an alkyl thiol methyltransferase that metabolizes hydrogen sulfide and captopril.</title>
        <authorList>
            <person name="Maldonato B.J."/>
            <person name="Russell D.A."/>
            <person name="Totah R.A."/>
        </authorList>
    </citation>
    <scope>IDENTIFICATION BY MASS SPECTROMETRY</scope>
    <scope>FUNCTION</scope>
    <scope>CATALYTIC ACTIVITY</scope>
    <scope>BIOPHYSICOCHEMICAL PROPERTIES</scope>
    <scope>MUTAGENESIS OF ASP-98</scope>
</reference>
<reference key="6">
    <citation type="journal article" date="2023" name="Drug Metab. Dispos.">
        <title>METTL7A (TMT1A) and METTL7B (TMT1B) Are Responsible for Alkyl S-Thiol Methyl Transferase Activity in Liver.</title>
        <authorList>
            <person name="Russell D.A."/>
            <person name="Chau M.K."/>
            <person name="Shi Y."/>
            <person name="Levasseur I.N."/>
            <person name="Maldonato B.J."/>
            <person name="Totah R.A."/>
        </authorList>
    </citation>
    <scope>FUNCTION</scope>
    <scope>CATALYTIC ACTIVITY</scope>
    <scope>BIOPHYSICOCHEMICAL PROPERTIES</scope>
    <scope>SUBCELLULAR LOCATION</scope>
    <scope>TISSUE SPECIFICITY</scope>
</reference>
<gene>
    <name evidence="6 8" type="primary">TMT1B</name>
    <name evidence="5 6" type="synonym">METTL7B</name>
    <name type="ORF">UNQ594/PRO1180</name>
</gene>
<proteinExistence type="evidence at protein level"/>
<sequence length="244" mass="27775">MDILVPLLQLLVLLLTLPLHLMALLGCWQPLCKSYFPYLMAVLTPKSNRKMESKKRELFSQIKGLTGASGKVALLELGCGTGANFQFYPPGCRVTCLDPNPHFEKFLTKSMAENRHLQYERFVVAPGEDMRQLADGSMDVVVCTLVLCSVQSPRKVLQEVRRVLRPGGVLFFWEHVAEPYGSWAFMWQQVFEPTWKHIGDGCCLTRETWKDLENAQFSEIQMERQPPPLKWLPVGPHIMGKAVK</sequence>